<proteinExistence type="inferred from homology"/>
<organism>
    <name type="scientific">Thermoanaerobacter sp. (strain X514)</name>
    <dbReference type="NCBI Taxonomy" id="399726"/>
    <lineage>
        <taxon>Bacteria</taxon>
        <taxon>Bacillati</taxon>
        <taxon>Bacillota</taxon>
        <taxon>Clostridia</taxon>
        <taxon>Thermoanaerobacterales</taxon>
        <taxon>Thermoanaerobacteraceae</taxon>
        <taxon>Thermoanaerobacter</taxon>
    </lineage>
</organism>
<name>Y1762_THEPX</name>
<feature type="chain" id="PRO_1000146093" description="Putative regulatory protein Teth514_1762">
    <location>
        <begin position="1"/>
        <end position="96"/>
    </location>
</feature>
<protein>
    <recommendedName>
        <fullName evidence="1">Putative regulatory protein Teth514_1762</fullName>
    </recommendedName>
</protein>
<evidence type="ECO:0000255" key="1">
    <source>
        <dbReference type="HAMAP-Rule" id="MF_01503"/>
    </source>
</evidence>
<sequence>MSIKLINIGFGNIISANRLVAIVSPESAPIKRIIQEAKNRGMLIDATYGRRTRAVIITDSDHIILSAVQPETVANRLNSNKEILEDTLEEDEEEEE</sequence>
<gene>
    <name type="ordered locus">Teth514_1762</name>
</gene>
<comment type="similarity">
    <text evidence="1">Belongs to the RemA family.</text>
</comment>
<reference key="1">
    <citation type="submission" date="2008-01" db="EMBL/GenBank/DDBJ databases">
        <title>Complete sequence of Thermoanaerobacter sp. X514.</title>
        <authorList>
            <consortium name="US DOE Joint Genome Institute"/>
            <person name="Copeland A."/>
            <person name="Lucas S."/>
            <person name="Lapidus A."/>
            <person name="Barry K."/>
            <person name="Glavina del Rio T."/>
            <person name="Dalin E."/>
            <person name="Tice H."/>
            <person name="Pitluck S."/>
            <person name="Bruce D."/>
            <person name="Goodwin L."/>
            <person name="Saunders E."/>
            <person name="Brettin T."/>
            <person name="Detter J.C."/>
            <person name="Han C."/>
            <person name="Schmutz J."/>
            <person name="Larimer F."/>
            <person name="Land M."/>
            <person name="Hauser L."/>
            <person name="Kyrpides N."/>
            <person name="Kim E."/>
            <person name="Hemme C."/>
            <person name="Fields M.W."/>
            <person name="He Z."/>
            <person name="Zhou J."/>
            <person name="Richardson P."/>
        </authorList>
    </citation>
    <scope>NUCLEOTIDE SEQUENCE [LARGE SCALE GENOMIC DNA]</scope>
    <source>
        <strain>X514</strain>
    </source>
</reference>
<dbReference type="EMBL" id="CP000923">
    <property type="protein sequence ID" value="ABY93048.1"/>
    <property type="molecule type" value="Genomic_DNA"/>
</dbReference>
<dbReference type="RefSeq" id="WP_009052445.1">
    <property type="nucleotide sequence ID" value="NC_010320.1"/>
</dbReference>
<dbReference type="SMR" id="B0K297"/>
<dbReference type="KEGG" id="tex:Teth514_1762"/>
<dbReference type="HOGENOM" id="CLU_165326_0_0_9"/>
<dbReference type="Proteomes" id="UP000002155">
    <property type="component" value="Chromosome"/>
</dbReference>
<dbReference type="HAMAP" id="MF_01503">
    <property type="entry name" value="RemA"/>
    <property type="match status" value="1"/>
</dbReference>
<dbReference type="InterPro" id="IPR007169">
    <property type="entry name" value="RemA-like"/>
</dbReference>
<dbReference type="NCBIfam" id="NF046064">
    <property type="entry name" value="MtxBflmRegRemA"/>
    <property type="match status" value="1"/>
</dbReference>
<dbReference type="NCBIfam" id="NF003315">
    <property type="entry name" value="PRK04323.1"/>
    <property type="match status" value="1"/>
</dbReference>
<dbReference type="PANTHER" id="PTHR38449:SF1">
    <property type="entry name" value="REGULATORY PROTEIN SSL2874-RELATED"/>
    <property type="match status" value="1"/>
</dbReference>
<dbReference type="PANTHER" id="PTHR38449">
    <property type="entry name" value="REGULATORY PROTEIN TM_1690-RELATED"/>
    <property type="match status" value="1"/>
</dbReference>
<dbReference type="Pfam" id="PF04025">
    <property type="entry name" value="RemA-like"/>
    <property type="match status" value="1"/>
</dbReference>
<accession>B0K297</accession>